<evidence type="ECO:0000255" key="1">
    <source>
        <dbReference type="HAMAP-Rule" id="MF_00523"/>
    </source>
</evidence>
<name>LPXD_PASMU</name>
<feature type="chain" id="PRO_0000059686" description="UDP-3-O-acylglucosamine N-acyltransferase">
    <location>
        <begin position="1"/>
        <end position="342"/>
    </location>
</feature>
<feature type="active site" description="Proton acceptor" evidence="1">
    <location>
        <position position="241"/>
    </location>
</feature>
<dbReference type="EC" id="2.3.1.191" evidence="1"/>
<dbReference type="EMBL" id="AE004439">
    <property type="protein sequence ID" value="AAK04078.1"/>
    <property type="molecule type" value="Genomic_DNA"/>
</dbReference>
<dbReference type="EMBL" id="X74357">
    <property type="protein sequence ID" value="CAA52401.1"/>
    <property type="molecule type" value="Genomic_DNA"/>
</dbReference>
<dbReference type="PIR" id="S47342">
    <property type="entry name" value="S47342"/>
</dbReference>
<dbReference type="RefSeq" id="WP_005725095.1">
    <property type="nucleotide sequence ID" value="NC_002663.1"/>
</dbReference>
<dbReference type="SMR" id="Q9CJL0"/>
<dbReference type="STRING" id="272843.PM1994"/>
<dbReference type="EnsemblBacteria" id="AAK04078">
    <property type="protein sequence ID" value="AAK04078"/>
    <property type="gene ID" value="PM1994"/>
</dbReference>
<dbReference type="GeneID" id="77207321"/>
<dbReference type="KEGG" id="pmu:PM1994"/>
<dbReference type="HOGENOM" id="CLU_049865_0_1_6"/>
<dbReference type="OrthoDB" id="9784739at2"/>
<dbReference type="UniPathway" id="UPA00973"/>
<dbReference type="Proteomes" id="UP000000809">
    <property type="component" value="Chromosome"/>
</dbReference>
<dbReference type="GO" id="GO:0016020">
    <property type="term" value="C:membrane"/>
    <property type="evidence" value="ECO:0007669"/>
    <property type="project" value="GOC"/>
</dbReference>
<dbReference type="GO" id="GO:0016410">
    <property type="term" value="F:N-acyltransferase activity"/>
    <property type="evidence" value="ECO:0007669"/>
    <property type="project" value="InterPro"/>
</dbReference>
<dbReference type="GO" id="GO:0009245">
    <property type="term" value="P:lipid A biosynthetic process"/>
    <property type="evidence" value="ECO:0007669"/>
    <property type="project" value="UniProtKB-UniRule"/>
</dbReference>
<dbReference type="CDD" id="cd03352">
    <property type="entry name" value="LbH_LpxD"/>
    <property type="match status" value="1"/>
</dbReference>
<dbReference type="FunFam" id="2.160.10.10:FF:000005">
    <property type="entry name" value="UDP-3-O-(3-hydroxymyristoyl)glucosamine N-acyltransferase"/>
    <property type="match status" value="1"/>
</dbReference>
<dbReference type="Gene3D" id="1.20.5.170">
    <property type="match status" value="1"/>
</dbReference>
<dbReference type="Gene3D" id="2.160.10.10">
    <property type="entry name" value="Hexapeptide repeat proteins"/>
    <property type="match status" value="1"/>
</dbReference>
<dbReference type="Gene3D" id="3.40.1390.10">
    <property type="entry name" value="MurE/MurF, N-terminal domain"/>
    <property type="match status" value="1"/>
</dbReference>
<dbReference type="HAMAP" id="MF_00523">
    <property type="entry name" value="LpxD"/>
    <property type="match status" value="1"/>
</dbReference>
<dbReference type="InterPro" id="IPR001451">
    <property type="entry name" value="Hexapep"/>
</dbReference>
<dbReference type="InterPro" id="IPR018357">
    <property type="entry name" value="Hexapep_transf_CS"/>
</dbReference>
<dbReference type="InterPro" id="IPR007691">
    <property type="entry name" value="LpxD"/>
</dbReference>
<dbReference type="InterPro" id="IPR011004">
    <property type="entry name" value="Trimer_LpxA-like_sf"/>
</dbReference>
<dbReference type="InterPro" id="IPR020573">
    <property type="entry name" value="UDP_GlcNAc_AcTrfase_non-rep"/>
</dbReference>
<dbReference type="NCBIfam" id="TIGR01853">
    <property type="entry name" value="lipid_A_lpxD"/>
    <property type="match status" value="1"/>
</dbReference>
<dbReference type="NCBIfam" id="NF002060">
    <property type="entry name" value="PRK00892.1"/>
    <property type="match status" value="1"/>
</dbReference>
<dbReference type="PANTHER" id="PTHR43378">
    <property type="entry name" value="UDP-3-O-ACYLGLUCOSAMINE N-ACYLTRANSFERASE"/>
    <property type="match status" value="1"/>
</dbReference>
<dbReference type="PANTHER" id="PTHR43378:SF2">
    <property type="entry name" value="UDP-3-O-ACYLGLUCOSAMINE N-ACYLTRANSFERASE 1, MITOCHONDRIAL-RELATED"/>
    <property type="match status" value="1"/>
</dbReference>
<dbReference type="Pfam" id="PF00132">
    <property type="entry name" value="Hexapep"/>
    <property type="match status" value="2"/>
</dbReference>
<dbReference type="Pfam" id="PF04613">
    <property type="entry name" value="LpxD"/>
    <property type="match status" value="1"/>
</dbReference>
<dbReference type="SUPFAM" id="SSF51161">
    <property type="entry name" value="Trimeric LpxA-like enzymes"/>
    <property type="match status" value="1"/>
</dbReference>
<dbReference type="PROSITE" id="PS00101">
    <property type="entry name" value="HEXAPEP_TRANSFERASES"/>
    <property type="match status" value="3"/>
</dbReference>
<proteinExistence type="inferred from homology"/>
<sequence>MQVYSLQELAQQIGATIRGNADVVVESIAPLDKATEKQLTFISNPKFRSLLAQSHAGILVVSEADVAFCAEQSNLLIVKDPYVAYAVLAQYMDSTPKAASGIAASAVVSASAVIGKNVSIGANAVIEDGVTLGDHVVIGANCFVGKNSKIGAYTQLWANVSVYHEVEIGQHCLIQSGAVIGSDGFGYANDRGRWIKIPQVGQVIIGNHVEIGACTCIDRGALDPTVIEDNVIIDNLCQIAHNVHIGTGTAVAGGVIMAGSLTVGRYCLIGGASVINGHMEICDKVTITGMGMVMRPITEPGVYSSGIPLQTNKEWRKTAALTLGIDAMNKRLKALEKKFEKK</sequence>
<organism>
    <name type="scientific">Pasteurella multocida (strain Pm70)</name>
    <dbReference type="NCBI Taxonomy" id="272843"/>
    <lineage>
        <taxon>Bacteria</taxon>
        <taxon>Pseudomonadati</taxon>
        <taxon>Pseudomonadota</taxon>
        <taxon>Gammaproteobacteria</taxon>
        <taxon>Pasteurellales</taxon>
        <taxon>Pasteurellaceae</taxon>
        <taxon>Pasteurella</taxon>
    </lineage>
</organism>
<protein>
    <recommendedName>
        <fullName evidence="1">UDP-3-O-acylglucosamine N-acyltransferase</fullName>
        <ecNumber evidence="1">2.3.1.191</ecNumber>
    </recommendedName>
</protein>
<reference key="1">
    <citation type="journal article" date="2001" name="Proc. Natl. Acad. Sci. U.S.A.">
        <title>Complete genomic sequence of Pasteurella multocida Pm70.</title>
        <authorList>
            <person name="May B.J."/>
            <person name="Zhang Q."/>
            <person name="Li L.L."/>
            <person name="Paustian M.L."/>
            <person name="Whittam T.S."/>
            <person name="Kapur V."/>
        </authorList>
    </citation>
    <scope>NUCLEOTIDE SEQUENCE [LARGE SCALE GENOMIC DNA]</scope>
    <source>
        <strain>Pm70</strain>
    </source>
</reference>
<reference key="2">
    <citation type="journal article" date="1995" name="Gene">
        <title>Characterization of the Pasteurella multocida skp and firA genes.</title>
        <authorList>
            <person name="Delamarche C."/>
            <person name="Manoha F."/>
            <person name="Behar G."/>
            <person name="Houlgatte R."/>
            <person name="Hellman U."/>
            <person name="Wroblewski H."/>
        </authorList>
    </citation>
    <scope>NUCLEOTIDE SEQUENCE [GENOMIC DNA] OF 1-339</scope>
    <source>
        <strain>9222</strain>
    </source>
</reference>
<keyword id="KW-0012">Acyltransferase</keyword>
<keyword id="KW-0441">Lipid A biosynthesis</keyword>
<keyword id="KW-0444">Lipid biosynthesis</keyword>
<keyword id="KW-0443">Lipid metabolism</keyword>
<keyword id="KW-1185">Reference proteome</keyword>
<keyword id="KW-0677">Repeat</keyword>
<keyword id="KW-0808">Transferase</keyword>
<gene>
    <name evidence="1" type="primary">lpxD</name>
    <name type="synonym">firA</name>
    <name type="ordered locus">PM1994</name>
</gene>
<accession>Q9CJL0</accession>
<accession>Q51923</accession>
<comment type="function">
    <text evidence="1">Catalyzes the N-acylation of UDP-3-O-acylglucosamine using 3-hydroxyacyl-ACP as the acyl donor. Is involved in the biosynthesis of lipid A, a phosphorylated glycolipid that anchors the lipopolysaccharide to the outer membrane of the cell.</text>
</comment>
<comment type="catalytic activity">
    <reaction evidence="1">
        <text>a UDP-3-O-[(3R)-3-hydroxyacyl]-alpha-D-glucosamine + a (3R)-hydroxyacyl-[ACP] = a UDP-2-N,3-O-bis[(3R)-3-hydroxyacyl]-alpha-D-glucosamine + holo-[ACP] + H(+)</text>
        <dbReference type="Rhea" id="RHEA:53836"/>
        <dbReference type="Rhea" id="RHEA-COMP:9685"/>
        <dbReference type="Rhea" id="RHEA-COMP:9945"/>
        <dbReference type="ChEBI" id="CHEBI:15378"/>
        <dbReference type="ChEBI" id="CHEBI:64479"/>
        <dbReference type="ChEBI" id="CHEBI:78827"/>
        <dbReference type="ChEBI" id="CHEBI:137740"/>
        <dbReference type="ChEBI" id="CHEBI:137748"/>
        <dbReference type="EC" id="2.3.1.191"/>
    </reaction>
</comment>
<comment type="pathway">
    <text evidence="1">Bacterial outer membrane biogenesis; LPS lipid A biosynthesis.</text>
</comment>
<comment type="subunit">
    <text evidence="1">Homotrimer.</text>
</comment>
<comment type="similarity">
    <text evidence="1">Belongs to the transferase hexapeptide repeat family. LpxD subfamily.</text>
</comment>